<accession>B9K8A4</accession>
<keyword id="KW-0687">Ribonucleoprotein</keyword>
<keyword id="KW-0689">Ribosomal protein</keyword>
<proteinExistence type="inferred from homology"/>
<reference key="1">
    <citation type="submission" date="2007-11" db="EMBL/GenBank/DDBJ databases">
        <title>The genome sequence of the hyperthermophilic bacterium Thermotoga neapolitana.</title>
        <authorList>
            <person name="Lim S.K."/>
            <person name="Kim J.S."/>
            <person name="Cha S.H."/>
            <person name="Park B.C."/>
            <person name="Lee D.S."/>
            <person name="Tae H.S."/>
            <person name="Kim S.-J."/>
            <person name="Kim J.J."/>
            <person name="Park K.J."/>
            <person name="Lee S.Y."/>
        </authorList>
    </citation>
    <scope>NUCLEOTIDE SEQUENCE [LARGE SCALE GENOMIC DNA]</scope>
    <source>
        <strain>ATCC 49049 / DSM 4359 / NBRC 107923 / NS-E</strain>
    </source>
</reference>
<dbReference type="EMBL" id="CP000916">
    <property type="protein sequence ID" value="ACM23187.1"/>
    <property type="molecule type" value="Genomic_DNA"/>
</dbReference>
<dbReference type="RefSeq" id="WP_015919503.1">
    <property type="nucleotide sequence ID" value="NC_011978.1"/>
</dbReference>
<dbReference type="SMR" id="B9K8A4"/>
<dbReference type="STRING" id="309803.CTN_1011"/>
<dbReference type="KEGG" id="tna:CTN_1011"/>
<dbReference type="eggNOG" id="COG1841">
    <property type="taxonomic scope" value="Bacteria"/>
</dbReference>
<dbReference type="HOGENOM" id="CLU_131047_2_1_0"/>
<dbReference type="Proteomes" id="UP000000445">
    <property type="component" value="Chromosome"/>
</dbReference>
<dbReference type="GO" id="GO:0022625">
    <property type="term" value="C:cytosolic large ribosomal subunit"/>
    <property type="evidence" value="ECO:0007669"/>
    <property type="project" value="TreeGrafter"/>
</dbReference>
<dbReference type="GO" id="GO:0003735">
    <property type="term" value="F:structural constituent of ribosome"/>
    <property type="evidence" value="ECO:0007669"/>
    <property type="project" value="InterPro"/>
</dbReference>
<dbReference type="GO" id="GO:0006412">
    <property type="term" value="P:translation"/>
    <property type="evidence" value="ECO:0007669"/>
    <property type="project" value="UniProtKB-UniRule"/>
</dbReference>
<dbReference type="CDD" id="cd01658">
    <property type="entry name" value="Ribosomal_L30"/>
    <property type="match status" value="1"/>
</dbReference>
<dbReference type="FunFam" id="3.30.1390.20:FF:000001">
    <property type="entry name" value="50S ribosomal protein L30"/>
    <property type="match status" value="1"/>
</dbReference>
<dbReference type="Gene3D" id="3.30.1390.20">
    <property type="entry name" value="Ribosomal protein L30, ferredoxin-like fold domain"/>
    <property type="match status" value="1"/>
</dbReference>
<dbReference type="HAMAP" id="MF_01371_B">
    <property type="entry name" value="Ribosomal_uL30_B"/>
    <property type="match status" value="1"/>
</dbReference>
<dbReference type="InterPro" id="IPR036919">
    <property type="entry name" value="Ribo_uL30_ferredoxin-like_sf"/>
</dbReference>
<dbReference type="InterPro" id="IPR005996">
    <property type="entry name" value="Ribosomal_uL30_bac-type"/>
</dbReference>
<dbReference type="InterPro" id="IPR018038">
    <property type="entry name" value="Ribosomal_uL30_CS"/>
</dbReference>
<dbReference type="InterPro" id="IPR016082">
    <property type="entry name" value="Ribosomal_uL30_ferredoxin-like"/>
</dbReference>
<dbReference type="NCBIfam" id="TIGR01308">
    <property type="entry name" value="rpmD_bact"/>
    <property type="match status" value="1"/>
</dbReference>
<dbReference type="PANTHER" id="PTHR15892:SF2">
    <property type="entry name" value="LARGE RIBOSOMAL SUBUNIT PROTEIN UL30M"/>
    <property type="match status" value="1"/>
</dbReference>
<dbReference type="PANTHER" id="PTHR15892">
    <property type="entry name" value="MITOCHONDRIAL RIBOSOMAL PROTEIN L30"/>
    <property type="match status" value="1"/>
</dbReference>
<dbReference type="Pfam" id="PF00327">
    <property type="entry name" value="Ribosomal_L30"/>
    <property type="match status" value="1"/>
</dbReference>
<dbReference type="PIRSF" id="PIRSF002211">
    <property type="entry name" value="Ribosomal_L30_bac-type"/>
    <property type="match status" value="1"/>
</dbReference>
<dbReference type="SUPFAM" id="SSF55129">
    <property type="entry name" value="Ribosomal protein L30p/L7e"/>
    <property type="match status" value="1"/>
</dbReference>
<dbReference type="PROSITE" id="PS00634">
    <property type="entry name" value="RIBOSOMAL_L30"/>
    <property type="match status" value="1"/>
</dbReference>
<gene>
    <name evidence="1" type="primary">rpmD</name>
    <name type="ordered locus">CTN_1011</name>
</gene>
<name>RL30_THENN</name>
<organism>
    <name type="scientific">Thermotoga neapolitana (strain ATCC 49049 / DSM 4359 / NBRC 107923 / NS-E)</name>
    <dbReference type="NCBI Taxonomy" id="309803"/>
    <lineage>
        <taxon>Bacteria</taxon>
        <taxon>Thermotogati</taxon>
        <taxon>Thermotogota</taxon>
        <taxon>Thermotogae</taxon>
        <taxon>Thermotogales</taxon>
        <taxon>Thermotogaceae</taxon>
        <taxon>Thermotoga</taxon>
    </lineage>
</organism>
<sequence length="67" mass="7797">MPKKLKIKLVKSPIGYPWDQKDTVKRLGLRRMNQVVIKDDCPQIRGMIRKVRHLVEVEEVEEGGNEA</sequence>
<comment type="subunit">
    <text evidence="1">Part of the 50S ribosomal subunit.</text>
</comment>
<comment type="similarity">
    <text evidence="1">Belongs to the universal ribosomal protein uL30 family.</text>
</comment>
<evidence type="ECO:0000255" key="1">
    <source>
        <dbReference type="HAMAP-Rule" id="MF_01371"/>
    </source>
</evidence>
<evidence type="ECO:0000305" key="2"/>
<feature type="chain" id="PRO_1000184167" description="Large ribosomal subunit protein uL30">
    <location>
        <begin position="1"/>
        <end position="67"/>
    </location>
</feature>
<protein>
    <recommendedName>
        <fullName evidence="1">Large ribosomal subunit protein uL30</fullName>
    </recommendedName>
    <alternativeName>
        <fullName evidence="2">50S ribosomal protein L30</fullName>
    </alternativeName>
</protein>